<comment type="subcellular location">
    <subcellularLocation>
        <location evidence="2">Secreted</location>
    </subcellularLocation>
</comment>
<gene>
    <name type="primary">ywoF</name>
    <name type="ordered locus">BSU36460</name>
</gene>
<name>YWOF_BACSU</name>
<organism>
    <name type="scientific">Bacillus subtilis (strain 168)</name>
    <dbReference type="NCBI Taxonomy" id="224308"/>
    <lineage>
        <taxon>Bacteria</taxon>
        <taxon>Bacillati</taxon>
        <taxon>Bacillota</taxon>
        <taxon>Bacilli</taxon>
        <taxon>Bacillales</taxon>
        <taxon>Bacillaceae</taxon>
        <taxon>Bacillus</taxon>
    </lineage>
</organism>
<dbReference type="EMBL" id="Z82987">
    <property type="protein sequence ID" value="CAB05379.1"/>
    <property type="molecule type" value="Genomic_DNA"/>
</dbReference>
<dbReference type="EMBL" id="AL009126">
    <property type="protein sequence ID" value="CAB15663.1"/>
    <property type="molecule type" value="Genomic_DNA"/>
</dbReference>
<dbReference type="PIR" id="A70065">
    <property type="entry name" value="A70065"/>
</dbReference>
<dbReference type="RefSeq" id="NP_391527.1">
    <property type="nucleotide sequence ID" value="NC_000964.3"/>
</dbReference>
<dbReference type="RefSeq" id="WP_003243080.1">
    <property type="nucleotide sequence ID" value="NZ_OZ025638.1"/>
</dbReference>
<dbReference type="SMR" id="P94576"/>
<dbReference type="STRING" id="224308.BSU36460"/>
<dbReference type="CAZy" id="PL9">
    <property type="family name" value="Polysaccharide Lyase Family 9"/>
</dbReference>
<dbReference type="PaxDb" id="224308-BSU36460"/>
<dbReference type="EnsemblBacteria" id="CAB15663">
    <property type="protein sequence ID" value="CAB15663"/>
    <property type="gene ID" value="BSU_36460"/>
</dbReference>
<dbReference type="GeneID" id="936925"/>
<dbReference type="KEGG" id="bsu:BSU36460"/>
<dbReference type="PATRIC" id="fig|224308.179.peg.3945"/>
<dbReference type="eggNOG" id="COG3420">
    <property type="taxonomic scope" value="Bacteria"/>
</dbReference>
<dbReference type="InParanoid" id="P94576"/>
<dbReference type="OrthoDB" id="9795486at2"/>
<dbReference type="BioCyc" id="BSUB:BSU36460-MONOMER"/>
<dbReference type="Proteomes" id="UP000001570">
    <property type="component" value="Chromosome"/>
</dbReference>
<dbReference type="GO" id="GO:0005576">
    <property type="term" value="C:extracellular region"/>
    <property type="evidence" value="ECO:0000318"/>
    <property type="project" value="GO_Central"/>
</dbReference>
<dbReference type="GO" id="GO:0016837">
    <property type="term" value="F:carbon-oxygen lyase activity, acting on polysaccharides"/>
    <property type="evidence" value="ECO:0000318"/>
    <property type="project" value="GO_Central"/>
</dbReference>
<dbReference type="Gene3D" id="2.160.20.10">
    <property type="entry name" value="Single-stranded right-handed beta-helix, Pectin lyase-like"/>
    <property type="match status" value="1"/>
</dbReference>
<dbReference type="InterPro" id="IPR006633">
    <property type="entry name" value="Carb-bd_sugar_hydrolysis-dom"/>
</dbReference>
<dbReference type="InterPro" id="IPR006626">
    <property type="entry name" value="PbH1"/>
</dbReference>
<dbReference type="InterPro" id="IPR012334">
    <property type="entry name" value="Pectin_lyas_fold"/>
</dbReference>
<dbReference type="InterPro" id="IPR011050">
    <property type="entry name" value="Pectin_lyase_fold/virulence"/>
</dbReference>
<dbReference type="InterPro" id="IPR053868">
    <property type="entry name" value="Pel9A-like_beta_helix"/>
</dbReference>
<dbReference type="InterPro" id="IPR052052">
    <property type="entry name" value="Polysaccharide_Lyase_9"/>
</dbReference>
<dbReference type="PANTHER" id="PTHR40088">
    <property type="entry name" value="PECTATE LYASE (EUROFUNG)"/>
    <property type="match status" value="1"/>
</dbReference>
<dbReference type="PANTHER" id="PTHR40088:SF2">
    <property type="entry name" value="SECRETED SUGAR HYDROLASE"/>
    <property type="match status" value="1"/>
</dbReference>
<dbReference type="Pfam" id="PF22842">
    <property type="entry name" value="Pel9A-like_beta_helix"/>
    <property type="match status" value="1"/>
</dbReference>
<dbReference type="SMART" id="SM00722">
    <property type="entry name" value="CASH"/>
    <property type="match status" value="1"/>
</dbReference>
<dbReference type="SMART" id="SM00710">
    <property type="entry name" value="PbH1"/>
    <property type="match status" value="8"/>
</dbReference>
<dbReference type="SUPFAM" id="SSF51126">
    <property type="entry name" value="Pectin lyase-like"/>
    <property type="match status" value="1"/>
</dbReference>
<protein>
    <recommendedName>
        <fullName>Uncharacterized protein YwoF</fullName>
    </recommendedName>
</protein>
<evidence type="ECO:0000255" key="1"/>
<evidence type="ECO:0000305" key="2">
    <source>
    </source>
</evidence>
<sequence>MRKWYFILLAGVLTSVILAFVYDKTKANEEGSGDYLYVSPNGSDQNEGTKEKPFRTLAHASEKAAAGTTVMIREGTYHETLDVKHSGTDGKPITFRNYENENVVISGESVANAEYETPLIRIHDKHDIAISGLTIQDLSVSSEEATAIGIYVSGSSSHIAIKDNHIRGIKTTADEGNAHGIAVYGTGSMKDIRIEDNTVEKLTLGASEAVVLNGNIDGFTVAGNVVRNNNNIGIDLIGYEGTADKNDYVRNGVVENNTVYQNSTYGNPAYGDEYSAGGIYVDGGHDIEIKNNTVYDNDIGIEATSEHKGKYANAIQITDNKVYNNAYTGISIGGYDKKRGGTSNSLIARNIMYRNDTKGLYGGQLLLQYDTKNNTIEKNILTAGDSRLFIGNDFTENEGNTVNHNVYHKEADQDGIWMWKKKEYDSFSSYRKATKNDQQSIYADPMFRDEASYDFSLDPDSPARPVIE</sequence>
<accession>P94576</accession>
<accession>Q795A4</accession>
<reference key="1">
    <citation type="journal article" date="1997" name="Microbiology">
        <title>The Bacillus subtilis genome from gerBC (311 degrees) to licR (334 degrees).</title>
        <authorList>
            <person name="Presecan E."/>
            <person name="Moszer I."/>
            <person name="Boursier L."/>
            <person name="Cruz Ramos H."/>
            <person name="De La Fuente V."/>
            <person name="Hullo M.-F."/>
            <person name="Lelong C."/>
            <person name="Schleich S."/>
            <person name="Sekowska A."/>
            <person name="Song B.H."/>
            <person name="Villani G."/>
            <person name="Kunst F."/>
            <person name="Danchin A."/>
            <person name="Glaser P."/>
        </authorList>
    </citation>
    <scope>NUCLEOTIDE SEQUENCE [GENOMIC DNA]</scope>
    <source>
        <strain>168</strain>
    </source>
</reference>
<reference key="2">
    <citation type="journal article" date="1997" name="Nature">
        <title>The complete genome sequence of the Gram-positive bacterium Bacillus subtilis.</title>
        <authorList>
            <person name="Kunst F."/>
            <person name="Ogasawara N."/>
            <person name="Moszer I."/>
            <person name="Albertini A.M."/>
            <person name="Alloni G."/>
            <person name="Azevedo V."/>
            <person name="Bertero M.G."/>
            <person name="Bessieres P."/>
            <person name="Bolotin A."/>
            <person name="Borchert S."/>
            <person name="Borriss R."/>
            <person name="Boursier L."/>
            <person name="Brans A."/>
            <person name="Braun M."/>
            <person name="Brignell S.C."/>
            <person name="Bron S."/>
            <person name="Brouillet S."/>
            <person name="Bruschi C.V."/>
            <person name="Caldwell B."/>
            <person name="Capuano V."/>
            <person name="Carter N.M."/>
            <person name="Choi S.-K."/>
            <person name="Codani J.-J."/>
            <person name="Connerton I.F."/>
            <person name="Cummings N.J."/>
            <person name="Daniel R.A."/>
            <person name="Denizot F."/>
            <person name="Devine K.M."/>
            <person name="Duesterhoeft A."/>
            <person name="Ehrlich S.D."/>
            <person name="Emmerson P.T."/>
            <person name="Entian K.-D."/>
            <person name="Errington J."/>
            <person name="Fabret C."/>
            <person name="Ferrari E."/>
            <person name="Foulger D."/>
            <person name="Fritz C."/>
            <person name="Fujita M."/>
            <person name="Fujita Y."/>
            <person name="Fuma S."/>
            <person name="Galizzi A."/>
            <person name="Galleron N."/>
            <person name="Ghim S.-Y."/>
            <person name="Glaser P."/>
            <person name="Goffeau A."/>
            <person name="Golightly E.J."/>
            <person name="Grandi G."/>
            <person name="Guiseppi G."/>
            <person name="Guy B.J."/>
            <person name="Haga K."/>
            <person name="Haiech J."/>
            <person name="Harwood C.R."/>
            <person name="Henaut A."/>
            <person name="Hilbert H."/>
            <person name="Holsappel S."/>
            <person name="Hosono S."/>
            <person name="Hullo M.-F."/>
            <person name="Itaya M."/>
            <person name="Jones L.-M."/>
            <person name="Joris B."/>
            <person name="Karamata D."/>
            <person name="Kasahara Y."/>
            <person name="Klaerr-Blanchard M."/>
            <person name="Klein C."/>
            <person name="Kobayashi Y."/>
            <person name="Koetter P."/>
            <person name="Koningstein G."/>
            <person name="Krogh S."/>
            <person name="Kumano M."/>
            <person name="Kurita K."/>
            <person name="Lapidus A."/>
            <person name="Lardinois S."/>
            <person name="Lauber J."/>
            <person name="Lazarevic V."/>
            <person name="Lee S.-M."/>
            <person name="Levine A."/>
            <person name="Liu H."/>
            <person name="Masuda S."/>
            <person name="Mauel C."/>
            <person name="Medigue C."/>
            <person name="Medina N."/>
            <person name="Mellado R.P."/>
            <person name="Mizuno M."/>
            <person name="Moestl D."/>
            <person name="Nakai S."/>
            <person name="Noback M."/>
            <person name="Noone D."/>
            <person name="O'Reilly M."/>
            <person name="Ogawa K."/>
            <person name="Ogiwara A."/>
            <person name="Oudega B."/>
            <person name="Park S.-H."/>
            <person name="Parro V."/>
            <person name="Pohl T.M."/>
            <person name="Portetelle D."/>
            <person name="Porwollik S."/>
            <person name="Prescott A.M."/>
            <person name="Presecan E."/>
            <person name="Pujic P."/>
            <person name="Purnelle B."/>
            <person name="Rapoport G."/>
            <person name="Rey M."/>
            <person name="Reynolds S."/>
            <person name="Rieger M."/>
            <person name="Rivolta C."/>
            <person name="Rocha E."/>
            <person name="Roche B."/>
            <person name="Rose M."/>
            <person name="Sadaie Y."/>
            <person name="Sato T."/>
            <person name="Scanlan E."/>
            <person name="Schleich S."/>
            <person name="Schroeter R."/>
            <person name="Scoffone F."/>
            <person name="Sekiguchi J."/>
            <person name="Sekowska A."/>
            <person name="Seror S.J."/>
            <person name="Serror P."/>
            <person name="Shin B.-S."/>
            <person name="Soldo B."/>
            <person name="Sorokin A."/>
            <person name="Tacconi E."/>
            <person name="Takagi T."/>
            <person name="Takahashi H."/>
            <person name="Takemaru K."/>
            <person name="Takeuchi M."/>
            <person name="Tamakoshi A."/>
            <person name="Tanaka T."/>
            <person name="Terpstra P."/>
            <person name="Tognoni A."/>
            <person name="Tosato V."/>
            <person name="Uchiyama S."/>
            <person name="Vandenbol M."/>
            <person name="Vannier F."/>
            <person name="Vassarotti A."/>
            <person name="Viari A."/>
            <person name="Wambutt R."/>
            <person name="Wedler E."/>
            <person name="Wedler H."/>
            <person name="Weitzenegger T."/>
            <person name="Winters P."/>
            <person name="Wipat A."/>
            <person name="Yamamoto H."/>
            <person name="Yamane K."/>
            <person name="Yasumoto K."/>
            <person name="Yata K."/>
            <person name="Yoshida K."/>
            <person name="Yoshikawa H.-F."/>
            <person name="Zumstein E."/>
            <person name="Yoshikawa H."/>
            <person name="Danchin A."/>
        </authorList>
    </citation>
    <scope>NUCLEOTIDE SEQUENCE [LARGE SCALE GENOMIC DNA]</scope>
    <source>
        <strain>168</strain>
    </source>
</reference>
<reference key="3">
    <citation type="journal article" date="2004" name="Biotechnol. Lett.">
        <title>Construction and application of a promoter-trapping vector with methyl parathion hydrolase gene mpd as the reporter.</title>
        <authorList>
            <person name="Cui Z.-L."/>
            <person name="Zhang X.-Z."/>
            <person name="Zhang Z.-H."/>
            <person name="Li S.-P."/>
        </authorList>
    </citation>
    <scope>IDENTIFICATION</scope>
</reference>
<reference key="4">
    <citation type="journal article" date="2006" name="Sheng Wu Gong Cheng Xue Bao">
        <title>Recombinant expression and secretion of mpd gene using the promoters and signal peptide-encoding sequences of ytkA and ywoF gene from Bacillus subtilis.</title>
        <authorList>
            <person name="Zhang X.-Z."/>
            <person name="Yan X."/>
            <person name="Cui Z.-L."/>
            <person name="Li S.-P."/>
        </authorList>
    </citation>
    <scope>SUBCELLULAR LOCATION</scope>
</reference>
<keyword id="KW-1185">Reference proteome</keyword>
<keyword id="KW-0677">Repeat</keyword>
<keyword id="KW-0964">Secreted</keyword>
<keyword id="KW-0732">Signal</keyword>
<proteinExistence type="inferred from homology"/>
<feature type="signal peptide" evidence="1">
    <location>
        <begin position="1"/>
        <end position="27"/>
    </location>
</feature>
<feature type="chain" id="PRO_0000359913" description="Uncharacterized protein YwoF">
    <location>
        <begin position="28"/>
        <end position="468"/>
    </location>
</feature>
<feature type="repeat" description="PbH1 1">
    <location>
        <begin position="125"/>
        <end position="154"/>
    </location>
</feature>
<feature type="repeat" description="PbH1 2">
    <location>
        <begin position="156"/>
        <end position="185"/>
    </location>
</feature>
<feature type="repeat" description="PbH1 3">
    <location>
        <begin position="189"/>
        <end position="214"/>
    </location>
</feature>
<feature type="repeat" description="PbH1 4">
    <location>
        <begin position="216"/>
        <end position="238"/>
    </location>
</feature>
<feature type="repeat" description="PbH1 5">
    <location>
        <begin position="249"/>
        <end position="283"/>
    </location>
</feature>
<feature type="repeat" description="PbH1 6">
    <location>
        <begin position="284"/>
        <end position="305"/>
    </location>
</feature>
<feature type="repeat" description="PbH1 7">
    <location>
        <begin position="312"/>
        <end position="334"/>
    </location>
</feature>
<feature type="repeat" description="PbH1 8">
    <location>
        <begin position="397"/>
        <end position="420"/>
    </location>
</feature>